<feature type="signal peptide" evidence="1">
    <location>
        <begin position="1"/>
        <end position="25"/>
    </location>
</feature>
<feature type="chain" id="PRO_0000086877" description="Conotoxin Gla-MrII">
    <location>
        <begin position="26"/>
        <end position="75"/>
    </location>
</feature>
<feature type="propeptide" id="PRO_0000425740">
    <location>
        <begin position="78"/>
        <end position="94"/>
    </location>
</feature>
<feature type="modified residue" description="4-carboxyglutamate" evidence="1">
    <location>
        <position position="30"/>
    </location>
</feature>
<feature type="modified residue" description="4-carboxyglutamate" evidence="1">
    <location>
        <position position="34"/>
    </location>
</feature>
<feature type="modified residue" description="4-carboxyglutamate" evidence="1">
    <location>
        <position position="37"/>
    </location>
</feature>
<feature type="modified residue" description="4-carboxyglutamate" evidence="1">
    <location>
        <position position="40"/>
    </location>
</feature>
<feature type="modified residue" description="4-carboxyglutamate" evidence="1">
    <location>
        <position position="41"/>
    </location>
</feature>
<keyword id="KW-0903">Direct protein sequencing</keyword>
<keyword id="KW-1015">Disulfide bond</keyword>
<keyword id="KW-0301">Gamma-carboxyglutamic acid</keyword>
<keyword id="KW-0964">Secreted</keyword>
<keyword id="KW-0732">Signal</keyword>
<keyword id="KW-0800">Toxin</keyword>
<organism>
    <name type="scientific">Conus marmoreus</name>
    <name type="common">Marble cone</name>
    <dbReference type="NCBI Taxonomy" id="42752"/>
    <lineage>
        <taxon>Eukaryota</taxon>
        <taxon>Metazoa</taxon>
        <taxon>Spiralia</taxon>
        <taxon>Lophotrochozoa</taxon>
        <taxon>Mollusca</taxon>
        <taxon>Gastropoda</taxon>
        <taxon>Caenogastropoda</taxon>
        <taxon>Neogastropoda</taxon>
        <taxon>Conoidea</taxon>
        <taxon>Conidae</taxon>
        <taxon>Conus</taxon>
    </lineage>
</organism>
<comment type="subcellular location">
    <subcellularLocation>
        <location>Secreted</location>
    </subcellularLocation>
</comment>
<comment type="tissue specificity">
    <text>Expressed by the venom duct.</text>
</comment>
<comment type="domain">
    <text>The cysteine framework is XII (C-C-C-C-CC-C-C).</text>
</comment>
<comment type="PTM">
    <text>Contains 4 disulfide bonds.</text>
</comment>
<comment type="mass spectrometry" mass="5860.23" method="Electrospray" evidence="1">
    <text>Monoisotopic mass.</text>
</comment>
<comment type="similarity">
    <text evidence="2">Belongs to the conotoxin I2 superfamily.</text>
</comment>
<sequence length="94" mass="10641">MFGHTSVSFLLLSIVALGMVATVICSCDSEFSSEFCEQPEERICSCSTHVCCHLSSSKRDQCMTWNRCLSAQTGNRRSTHMQKRFLRMPRDLAD</sequence>
<reference key="1">
    <citation type="journal article" date="2010" name="Acta Biochim. Biophys. Sin.">
        <title>cDNA cloning of conotoxins with framework XII from several Conus species.</title>
        <authorList>
            <person name="Liu Z."/>
            <person name="Yu Z."/>
            <person name="Liu N."/>
            <person name="Zhao C."/>
            <person name="Hu J."/>
            <person name="Dai Q."/>
        </authorList>
    </citation>
    <scope>NUCLEOTIDE SEQUENCE [MRNA]</scope>
</reference>
<reference key="2">
    <citation type="journal article" date="2004" name="Biochem. Biophys. Res. Commun.">
        <title>Isolation and characterization of three novel Gla-containing Conus marmoreus venom peptides, one with a novel cysteine pattern.</title>
        <authorList>
            <person name="Hansson K."/>
            <person name="Furie B."/>
            <person name="Furie B.C."/>
            <person name="Stenflo J."/>
        </authorList>
    </citation>
    <scope>PROTEIN SEQUENCE OF 26-75</scope>
    <scope>GAMMA-CARBOXYGLUTAMATION AT GLU-30; GLU-34; GLU-37; GLU-40 AND GLU-41</scope>
    <scope>MASS SPECTROMETRY</scope>
    <source>
        <tissue>Venom</tissue>
    </source>
</reference>
<name>CX2_CONMR</name>
<dbReference type="EMBL" id="GQ228841">
    <property type="protein sequence ID" value="ACV13220.1"/>
    <property type="molecule type" value="mRNA"/>
</dbReference>
<dbReference type="TCDB" id="8.B.21.1.10">
    <property type="family name" value="the spider insecticidal neurotoxin cyrtautoxin (cyrautoxin) family"/>
</dbReference>
<dbReference type="ConoServer" id="1524">
    <property type="toxin name" value="Gla-MrII"/>
</dbReference>
<dbReference type="ConoServer" id="3859">
    <property type="toxin name" value="Gla-MrII precursor"/>
</dbReference>
<dbReference type="GO" id="GO:0005576">
    <property type="term" value="C:extracellular region"/>
    <property type="evidence" value="ECO:0007669"/>
    <property type="project" value="UniProtKB-SubCell"/>
</dbReference>
<dbReference type="GO" id="GO:0090729">
    <property type="term" value="F:toxin activity"/>
    <property type="evidence" value="ECO:0007669"/>
    <property type="project" value="UniProtKB-KW"/>
</dbReference>
<proteinExistence type="evidence at protein level"/>
<accession>P69770</accession>
<accession>C8BLS2</accession>
<protein>
    <recommendedName>
        <fullName>Conotoxin Gla-MrII</fullName>
    </recommendedName>
    <alternativeName>
        <fullName>Conotoxin Mr12.5</fullName>
    </alternativeName>
</protein>
<evidence type="ECO:0000269" key="1">
    <source>
    </source>
</evidence>
<evidence type="ECO:0000305" key="2"/>